<sequence length="750" mass="82758">MAHRKRQSTASSMLDHRARPGPIPHDQEPESEDTELPLESYVPTGLELGTLRPESPTPEEQECHNHSPDGDSSSDYVNNTSEEEDYDEGLPEEEEGVTYYIRYCPEDDSYLEGMDCNGEEYIAHGAHPVDTDECQEAVEDWTDSVGPHTHSHGAENSQEYPDGHLPIPEDDPTVLEVHDQEEDGHYCSSKESYQDYYPPETNGNTGGASPYRMRRGDGDLEEQEEDIDQIVAEIKMSLSMTSITSASEASPEHMPELDPGDSTEACPPSDTGHGPGRQEARPKSLNLPPEVKHPGDLQRGLKTKTRTPEERPKWPQEQVCNGLEQPRKQQRSDLNGPTDNNNIPETKKVASFPSFVAVPGPCEAEDLIDGIIFAANYLGSTQLLSERNPSKNIRMMQAQEAVSRVKRMQKAAKIKKKANSEGDAQTLTEVDLFISTQRIKVLNADTQETMMDHALRTISYIADIGNIVVLMARRRMPRSASQDCIETTPGAQEGKKQYKMICHVFESEDAQLIAQSIGQAFSVAYQEFLRANGINPEDLSQKEYSDIINTQEMYNDDLIHFSNSENCKELQLEKHKGEILGVVVVESGWGSILPTVILANMMNGGPAARSGKLSIGDQIMSINGTSLVGLPLATCQGIIKGLKNQTQVKLNIVSCPPVTTVLIKRPDLKYQLGFSVQNGIICSLMRGGIAERGGVRVGHRIIEINGQSVVATAHEKIVQALSNSVGEIHMKTMPAAMFRLLTGQETPLYI</sequence>
<accession>P98084</accession>
<accession>Q6PAJ2</accession>
<proteinExistence type="evidence at protein level"/>
<evidence type="ECO:0000250" key="1"/>
<evidence type="ECO:0000250" key="2">
    <source>
        <dbReference type="UniProtKB" id="Q99767"/>
    </source>
</evidence>
<evidence type="ECO:0000255" key="3">
    <source>
        <dbReference type="PROSITE-ProRule" id="PRU00143"/>
    </source>
</evidence>
<evidence type="ECO:0000255" key="4">
    <source>
        <dbReference type="PROSITE-ProRule" id="PRU00148"/>
    </source>
</evidence>
<evidence type="ECO:0000256" key="5">
    <source>
        <dbReference type="SAM" id="MobiDB-lite"/>
    </source>
</evidence>
<evidence type="ECO:0000305" key="6"/>
<evidence type="ECO:0000305" key="7">
    <source>
    </source>
</evidence>
<comment type="function">
    <text>Putative function in synaptic vesicle exocytosis by binding to STXBP1, an essential component of the synaptic vesicle exocytotic machinery. May modulate processing of the amyloid-beta precursor protein (APP) and hence formation of APP-beta.</text>
</comment>
<comment type="subunit">
    <text evidence="1">Part of a multimeric complex containing STXBP1 and syntaxin-1. Binds to the cytoplasmic domain of amyloid-beta protein, and to the nuclear factor NF-kappa-B/p65 via its PDZ domain. Interacts with the N-terminal domain of NECAB3 (By similarity).</text>
</comment>
<comment type="interaction">
    <interactant intactId="EBI-81669">
        <id>P98084</id>
    </interactant>
    <interactant intactId="EBI-78814">
        <id>P12023</id>
        <label>App</label>
    </interactant>
    <organismsDiffer>false</organismsDiffer>
    <experiments>2</experiments>
</comment>
<comment type="interaction">
    <interactant intactId="EBI-81669">
        <id>P98084</id>
    </interactant>
    <interactant intactId="EBI-297277">
        <id>P49768</id>
        <label>PSEN1</label>
    </interactant>
    <organismsDiffer>true</organismsDiffer>
    <experiments>2</experiments>
</comment>
<comment type="tissue specificity">
    <text>Specifically expressed in neurons, predominantly of the cerebellum, hippocampus, and spinal cord. Lesser extent in neurons of the cerebral cortex and anterior thalmic nuclei.</text>
</comment>
<comment type="domain">
    <text>Composed of an N-terminal domain that binds STXBP1, a middle phosphotyrosine-binding domain (PID/PTB) that mediates binding with the cytoplasmic domain of the amyloid-beta precursor protein, and two C-terminal PDZ domains thought to attach proteins to the plasma membrane.</text>
</comment>
<comment type="caution">
    <text evidence="7">Was originally thought to be the ortholog of human X11 (APBA1).</text>
</comment>
<organism>
    <name type="scientific">Mus musculus</name>
    <name type="common">Mouse</name>
    <dbReference type="NCBI Taxonomy" id="10090"/>
    <lineage>
        <taxon>Eukaryota</taxon>
        <taxon>Metazoa</taxon>
        <taxon>Chordata</taxon>
        <taxon>Craniata</taxon>
        <taxon>Vertebrata</taxon>
        <taxon>Euteleostomi</taxon>
        <taxon>Mammalia</taxon>
        <taxon>Eutheria</taxon>
        <taxon>Euarchontoglires</taxon>
        <taxon>Glires</taxon>
        <taxon>Rodentia</taxon>
        <taxon>Myomorpha</taxon>
        <taxon>Muroidea</taxon>
        <taxon>Muridae</taxon>
        <taxon>Murinae</taxon>
        <taxon>Mus</taxon>
        <taxon>Mus</taxon>
    </lineage>
</organism>
<reference key="1">
    <citation type="journal article" date="2004" name="Genome Res.">
        <title>The status, quality, and expansion of the NIH full-length cDNA project: the Mammalian Gene Collection (MGC).</title>
        <authorList>
            <consortium name="The MGC Project Team"/>
        </authorList>
    </citation>
    <scope>NUCLEOTIDE SEQUENCE [LARGE SCALE MRNA]</scope>
    <source>
        <strain>C57BL/6J</strain>
        <tissue>Brain</tissue>
    </source>
</reference>
<reference key="2">
    <citation type="journal article" date="1995" name="Mamm. Genome">
        <title>Comparison of primary structure of a neuron-specific protein, X11, between human and mouse.</title>
        <authorList>
            <person name="Duclos F."/>
            <person name="Koenig M."/>
        </authorList>
    </citation>
    <scope>NUCLEOTIDE SEQUENCE [MRNA] OF 70-750</scope>
    <source>
        <tissue>Brain</tissue>
    </source>
</reference>
<reference key="3">
    <citation type="journal article" date="2004" name="Mol. Cell. Proteomics">
        <title>Phosphoproteomic analysis of the developing mouse brain.</title>
        <authorList>
            <person name="Ballif B.A."/>
            <person name="Villen J."/>
            <person name="Beausoleil S.A."/>
            <person name="Schwartz D."/>
            <person name="Gygi S.P."/>
        </authorList>
    </citation>
    <scope>IDENTIFICATION BY MASS SPECTROMETRY [LARGE SCALE ANALYSIS]</scope>
    <source>
        <tissue>Embryonic brain</tissue>
    </source>
</reference>
<reference key="4">
    <citation type="journal article" date="2010" name="Cell">
        <title>A tissue-specific atlas of mouse protein phosphorylation and expression.</title>
        <authorList>
            <person name="Huttlin E.L."/>
            <person name="Jedrychowski M.P."/>
            <person name="Elias J.E."/>
            <person name="Goswami T."/>
            <person name="Rad R."/>
            <person name="Beausoleil S.A."/>
            <person name="Villen J."/>
            <person name="Haas W."/>
            <person name="Sowa M.E."/>
            <person name="Gygi S.P."/>
        </authorList>
    </citation>
    <scope>IDENTIFICATION BY MASS SPECTROMETRY [LARGE SCALE ANALYSIS]</scope>
    <source>
        <tissue>Brain</tissue>
    </source>
</reference>
<dbReference type="EMBL" id="BC060269">
    <property type="protein sequence ID" value="AAH60269.1"/>
    <property type="molecule type" value="mRNA"/>
</dbReference>
<dbReference type="EMBL" id="BC057620">
    <property type="protein sequence ID" value="AAH57620.1"/>
    <property type="molecule type" value="mRNA"/>
</dbReference>
<dbReference type="EMBL" id="L34676">
    <property type="protein sequence ID" value="AAA73936.1"/>
    <property type="molecule type" value="mRNA"/>
</dbReference>
<dbReference type="CCDS" id="CCDS21335.1"/>
<dbReference type="RefSeq" id="NP_001278095.1">
    <property type="nucleotide sequence ID" value="NM_001291166.2"/>
</dbReference>
<dbReference type="RefSeq" id="NP_001278096.1">
    <property type="nucleotide sequence ID" value="NM_001291167.2"/>
</dbReference>
<dbReference type="RefSeq" id="NP_001398860.1">
    <property type="nucleotide sequence ID" value="NM_001411931.1"/>
</dbReference>
<dbReference type="RefSeq" id="NP_001398861.1">
    <property type="nucleotide sequence ID" value="NM_001411932.1"/>
</dbReference>
<dbReference type="RefSeq" id="NP_001398862.1">
    <property type="nucleotide sequence ID" value="NM_001411933.1"/>
</dbReference>
<dbReference type="RefSeq" id="NP_001398863.1">
    <property type="nucleotide sequence ID" value="NM_001411934.1"/>
</dbReference>
<dbReference type="RefSeq" id="NP_001398864.1">
    <property type="nucleotide sequence ID" value="NM_001411935.1"/>
</dbReference>
<dbReference type="RefSeq" id="NP_031487.1">
    <property type="nucleotide sequence ID" value="NM_007461.3"/>
</dbReference>
<dbReference type="RefSeq" id="XP_006540636.1">
    <property type="nucleotide sequence ID" value="XM_006540573.3"/>
</dbReference>
<dbReference type="RefSeq" id="XP_006540637.1">
    <property type="nucleotide sequence ID" value="XM_006540574.3"/>
</dbReference>
<dbReference type="RefSeq" id="XP_017177434.1">
    <property type="nucleotide sequence ID" value="XM_017321945.1"/>
</dbReference>
<dbReference type="RefSeq" id="XP_030097869.1">
    <property type="nucleotide sequence ID" value="XM_030242009.1"/>
</dbReference>
<dbReference type="RefSeq" id="XP_030097871.1">
    <property type="nucleotide sequence ID" value="XM_030242011.2"/>
</dbReference>
<dbReference type="RefSeq" id="XP_036008478.1">
    <property type="nucleotide sequence ID" value="XM_036152585.1"/>
</dbReference>
<dbReference type="RefSeq" id="XP_036008479.1">
    <property type="nucleotide sequence ID" value="XM_036152586.1"/>
</dbReference>
<dbReference type="SMR" id="P98084"/>
<dbReference type="BioGRID" id="198140">
    <property type="interactions" value="1"/>
</dbReference>
<dbReference type="FunCoup" id="P98084">
    <property type="interactions" value="763"/>
</dbReference>
<dbReference type="IntAct" id="P98084">
    <property type="interactions" value="5"/>
</dbReference>
<dbReference type="MINT" id="P98084"/>
<dbReference type="STRING" id="10090.ENSMUSP00000032732"/>
<dbReference type="GlyGen" id="P98084">
    <property type="glycosylation" value="2 sites, 1 N-linked glycan (1 site)"/>
</dbReference>
<dbReference type="iPTMnet" id="P98084"/>
<dbReference type="PhosphoSitePlus" id="P98084"/>
<dbReference type="jPOST" id="P98084"/>
<dbReference type="PaxDb" id="10090-ENSMUSP00000032732"/>
<dbReference type="ProteomicsDB" id="281792"/>
<dbReference type="Antibodypedia" id="22443">
    <property type="antibodies" value="208 antibodies from 35 providers"/>
</dbReference>
<dbReference type="DNASU" id="11784"/>
<dbReference type="Ensembl" id="ENSMUST00000032732.15">
    <property type="protein sequence ID" value="ENSMUSP00000032732.9"/>
    <property type="gene ID" value="ENSMUSG00000030519.15"/>
</dbReference>
<dbReference type="GeneID" id="11784"/>
<dbReference type="KEGG" id="mmu:11784"/>
<dbReference type="UCSC" id="uc009hgj.2">
    <property type="organism name" value="mouse"/>
</dbReference>
<dbReference type="AGR" id="MGI:1261791"/>
<dbReference type="CTD" id="321"/>
<dbReference type="MGI" id="MGI:1261791">
    <property type="gene designation" value="Apba2"/>
</dbReference>
<dbReference type="VEuPathDB" id="HostDB:ENSMUSG00000030519"/>
<dbReference type="eggNOG" id="KOG3605">
    <property type="taxonomic scope" value="Eukaryota"/>
</dbReference>
<dbReference type="GeneTree" id="ENSGT00940000158943"/>
<dbReference type="HOGENOM" id="CLU_013563_3_0_1"/>
<dbReference type="InParanoid" id="P98084"/>
<dbReference type="OMA" id="HEENHIE"/>
<dbReference type="OrthoDB" id="5987010at2759"/>
<dbReference type="PhylomeDB" id="P98084"/>
<dbReference type="TreeFam" id="TF315245"/>
<dbReference type="BioGRID-ORCS" id="11784">
    <property type="hits" value="2 hits in 78 CRISPR screens"/>
</dbReference>
<dbReference type="ChiTaRS" id="Apba2">
    <property type="organism name" value="mouse"/>
</dbReference>
<dbReference type="PRO" id="PR:P98084"/>
<dbReference type="Proteomes" id="UP000000589">
    <property type="component" value="Chromosome 7"/>
</dbReference>
<dbReference type="RNAct" id="P98084">
    <property type="molecule type" value="protein"/>
</dbReference>
<dbReference type="Bgee" id="ENSMUSG00000030519">
    <property type="expression patterns" value="Expressed in embryonic brain and 149 other cell types or tissues"/>
</dbReference>
<dbReference type="ExpressionAtlas" id="P98084">
    <property type="expression patterns" value="baseline and differential"/>
</dbReference>
<dbReference type="GO" id="GO:0098793">
    <property type="term" value="C:presynapse"/>
    <property type="evidence" value="ECO:0007669"/>
    <property type="project" value="Ensembl"/>
</dbReference>
<dbReference type="GO" id="GO:0098685">
    <property type="term" value="C:Schaffer collateral - CA1 synapse"/>
    <property type="evidence" value="ECO:0000314"/>
    <property type="project" value="SynGO"/>
</dbReference>
<dbReference type="GO" id="GO:0001540">
    <property type="term" value="F:amyloid-beta binding"/>
    <property type="evidence" value="ECO:0007669"/>
    <property type="project" value="Ensembl"/>
</dbReference>
<dbReference type="GO" id="GO:0042802">
    <property type="term" value="F:identical protein binding"/>
    <property type="evidence" value="ECO:0007669"/>
    <property type="project" value="Ensembl"/>
</dbReference>
<dbReference type="GO" id="GO:0007268">
    <property type="term" value="P:chemical synaptic transmission"/>
    <property type="evidence" value="ECO:0000316"/>
    <property type="project" value="MGI"/>
</dbReference>
<dbReference type="GO" id="GO:0001701">
    <property type="term" value="P:in utero embryonic development"/>
    <property type="evidence" value="ECO:0000316"/>
    <property type="project" value="MGI"/>
</dbReference>
<dbReference type="GO" id="GO:0007626">
    <property type="term" value="P:locomotory behavior"/>
    <property type="evidence" value="ECO:0000316"/>
    <property type="project" value="MGI"/>
</dbReference>
<dbReference type="GO" id="GO:0035264">
    <property type="term" value="P:multicellular organism growth"/>
    <property type="evidence" value="ECO:0000316"/>
    <property type="project" value="MGI"/>
</dbReference>
<dbReference type="GO" id="GO:0099171">
    <property type="term" value="P:presynaptic modulation of chemical synaptic transmission"/>
    <property type="evidence" value="ECO:0000314"/>
    <property type="project" value="SynGO"/>
</dbReference>
<dbReference type="GO" id="GO:0015031">
    <property type="term" value="P:protein transport"/>
    <property type="evidence" value="ECO:0007669"/>
    <property type="project" value="UniProtKB-KW"/>
</dbReference>
<dbReference type="GO" id="GO:0010468">
    <property type="term" value="P:regulation of gene expression"/>
    <property type="evidence" value="ECO:0000316"/>
    <property type="project" value="MGI"/>
</dbReference>
<dbReference type="CDD" id="cd06720">
    <property type="entry name" value="PDZ1_APBA1_3-like"/>
    <property type="match status" value="1"/>
</dbReference>
<dbReference type="CDD" id="cd06793">
    <property type="entry name" value="PDZ2_APBA1_3-like"/>
    <property type="match status" value="1"/>
</dbReference>
<dbReference type="CDD" id="cd01208">
    <property type="entry name" value="PTB_X11"/>
    <property type="match status" value="1"/>
</dbReference>
<dbReference type="FunFam" id="2.30.29.30:FF:000044">
    <property type="entry name" value="amyloid beta A4 precursor protein-binding family A member 1"/>
    <property type="match status" value="1"/>
</dbReference>
<dbReference type="FunFam" id="2.30.42.10:FF:000007">
    <property type="entry name" value="Amyloid beta A4 protein-binding family A member"/>
    <property type="match status" value="1"/>
</dbReference>
<dbReference type="FunFam" id="2.30.42.10:FF:000017">
    <property type="entry name" value="Amyloid beta A4 protein-binding family A member 1"/>
    <property type="match status" value="1"/>
</dbReference>
<dbReference type="Gene3D" id="2.30.42.10">
    <property type="match status" value="2"/>
</dbReference>
<dbReference type="Gene3D" id="2.30.29.30">
    <property type="entry name" value="Pleckstrin-homology domain (PH domain)/Phosphotyrosine-binding domain (PTB)"/>
    <property type="match status" value="1"/>
</dbReference>
<dbReference type="InterPro" id="IPR051230">
    <property type="entry name" value="APP-Binding"/>
</dbReference>
<dbReference type="InterPro" id="IPR001478">
    <property type="entry name" value="PDZ"/>
</dbReference>
<dbReference type="InterPro" id="IPR036034">
    <property type="entry name" value="PDZ_sf"/>
</dbReference>
<dbReference type="InterPro" id="IPR011993">
    <property type="entry name" value="PH-like_dom_sf"/>
</dbReference>
<dbReference type="InterPro" id="IPR006020">
    <property type="entry name" value="PTB/PI_dom"/>
</dbReference>
<dbReference type="PANTHER" id="PTHR12345:SF12">
    <property type="entry name" value="AMYLOID-BETA A4 PRECURSOR PROTEIN-BINDING FAMILY A MEMBER 2"/>
    <property type="match status" value="1"/>
</dbReference>
<dbReference type="PANTHER" id="PTHR12345">
    <property type="entry name" value="SYNTENIN RELATED"/>
    <property type="match status" value="1"/>
</dbReference>
<dbReference type="Pfam" id="PF00595">
    <property type="entry name" value="PDZ"/>
    <property type="match status" value="2"/>
</dbReference>
<dbReference type="Pfam" id="PF00640">
    <property type="entry name" value="PID"/>
    <property type="match status" value="1"/>
</dbReference>
<dbReference type="SMART" id="SM00228">
    <property type="entry name" value="PDZ"/>
    <property type="match status" value="2"/>
</dbReference>
<dbReference type="SMART" id="SM00462">
    <property type="entry name" value="PTB"/>
    <property type="match status" value="1"/>
</dbReference>
<dbReference type="SUPFAM" id="SSF50156">
    <property type="entry name" value="PDZ domain-like"/>
    <property type="match status" value="2"/>
</dbReference>
<dbReference type="SUPFAM" id="SSF50729">
    <property type="entry name" value="PH domain-like"/>
    <property type="match status" value="1"/>
</dbReference>
<dbReference type="PROSITE" id="PS50106">
    <property type="entry name" value="PDZ"/>
    <property type="match status" value="2"/>
</dbReference>
<dbReference type="PROSITE" id="PS01179">
    <property type="entry name" value="PID"/>
    <property type="match status" value="1"/>
</dbReference>
<feature type="chain" id="PRO_0000064617" description="Amyloid-beta A4 precursor protein-binding family A member 2">
    <location>
        <begin position="1"/>
        <end position="750"/>
    </location>
</feature>
<feature type="domain" description="PID" evidence="4">
    <location>
        <begin position="367"/>
        <end position="556"/>
    </location>
</feature>
<feature type="domain" description="PDZ 1" evidence="3">
    <location>
        <begin position="569"/>
        <end position="654"/>
    </location>
</feature>
<feature type="domain" description="PDZ 2" evidence="3">
    <location>
        <begin position="660"/>
        <end position="736"/>
    </location>
</feature>
<feature type="region of interest" description="Disordered" evidence="5">
    <location>
        <begin position="1"/>
        <end position="94"/>
    </location>
</feature>
<feature type="region of interest" description="Disordered" evidence="5">
    <location>
        <begin position="143"/>
        <end position="346"/>
    </location>
</feature>
<feature type="region of interest" description="STXBP1-binding">
    <location>
        <begin position="185"/>
        <end position="271"/>
    </location>
</feature>
<feature type="compositionally biased region" description="Polar residues" evidence="5">
    <location>
        <begin position="70"/>
        <end position="80"/>
    </location>
</feature>
<feature type="compositionally biased region" description="Acidic residues" evidence="5">
    <location>
        <begin position="81"/>
        <end position="94"/>
    </location>
</feature>
<feature type="compositionally biased region" description="Acidic residues" evidence="5">
    <location>
        <begin position="219"/>
        <end position="228"/>
    </location>
</feature>
<feature type="compositionally biased region" description="Polar residues" evidence="5">
    <location>
        <begin position="238"/>
        <end position="248"/>
    </location>
</feature>
<feature type="compositionally biased region" description="Polar residues" evidence="5">
    <location>
        <begin position="332"/>
        <end position="344"/>
    </location>
</feature>
<feature type="modified residue" description="Phosphoserine" evidence="2">
    <location>
        <position position="11"/>
    </location>
</feature>
<feature type="modified residue" description="Phosphoserine" evidence="2">
    <location>
        <position position="209"/>
    </location>
</feature>
<feature type="sequence conflict" description="In Ref. 2; AAA73936." evidence="6" ref="2">
    <original>K</original>
    <variation>M</variation>
    <location>
        <position position="313"/>
    </location>
</feature>
<feature type="sequence conflict" description="In Ref. 2; AAA73936." evidence="6" ref="2">
    <original>N</original>
    <variation>T</variation>
    <location>
        <position position="388"/>
    </location>
</feature>
<feature type="sequence conflict" description="In Ref. 2; AAA73936." evidence="6" ref="2">
    <original>V</original>
    <variation>A</variation>
    <location>
        <position position="402"/>
    </location>
</feature>
<feature type="sequence conflict" description="In Ref. 2; AAA73936." evidence="6" ref="2">
    <original>QNG</original>
    <variation>RW</variation>
    <location>
        <begin position="677"/>
        <end position="679"/>
    </location>
</feature>
<feature type="sequence conflict" description="In Ref. 2; AAA73936." evidence="6" ref="2">
    <original>GIA</original>
    <variation>VLQ</variation>
    <location>
        <begin position="688"/>
        <end position="690"/>
    </location>
</feature>
<name>APBA2_MOUSE</name>
<gene>
    <name type="primary">Apba2</name>
    <name type="synonym">X11l</name>
</gene>
<keyword id="KW-0597">Phosphoprotein</keyword>
<keyword id="KW-0653">Protein transport</keyword>
<keyword id="KW-1185">Reference proteome</keyword>
<keyword id="KW-0677">Repeat</keyword>
<keyword id="KW-0813">Transport</keyword>
<protein>
    <recommendedName>
        <fullName>Amyloid-beta A4 precursor protein-binding family A member 2</fullName>
    </recommendedName>
    <alternativeName>
        <fullName>Adapter protein X11beta</fullName>
    </alternativeName>
    <alternativeName>
        <fullName>Neuron-specific X11L protein</fullName>
    </alternativeName>
    <alternativeName>
        <fullName>Neuronal Munc18-1-interacting protein 2</fullName>
        <shortName>Mint-2</shortName>
    </alternativeName>
</protein>